<evidence type="ECO:0000255" key="1">
    <source>
        <dbReference type="PROSITE-ProRule" id="PRU00798"/>
    </source>
</evidence>
<reference key="1">
    <citation type="journal article" date="1987" name="Biochemistry">
        <title>Ovomucoid third domains from 100 avian species: isolation, sequences, and hypervariability of enzyme-inhibitor contact residues.</title>
        <authorList>
            <person name="Laskowski M. Jr."/>
            <person name="Kato I."/>
            <person name="Ardelt W."/>
            <person name="Cook J."/>
            <person name="Denton A."/>
            <person name="Empie M.W."/>
            <person name="Kohr W.J."/>
            <person name="Park S.J."/>
            <person name="Parks K."/>
            <person name="Schatzley B.L."/>
            <person name="Schoenberger O.L."/>
            <person name="Tashiro M."/>
            <person name="Vichot G."/>
            <person name="Whatley H.E."/>
            <person name="Wieczorek A."/>
            <person name="Wieczorek M."/>
        </authorList>
    </citation>
    <scope>PROTEIN SEQUENCE</scope>
</reference>
<reference key="2">
    <citation type="journal article" date="1990" name="J. Protein Chem.">
        <title>Amino acid sequences of ovomucoid third domain from 25 additional species of birds.</title>
        <authorList>
            <person name="Laskowski M. Jr."/>
            <person name="Apostol I."/>
            <person name="Ardelt W."/>
            <person name="Cook J."/>
            <person name="Giletto A."/>
            <person name="Kelly C.A."/>
            <person name="Lu W."/>
            <person name="Park S.J."/>
            <person name="Qasim M.A."/>
            <person name="Whatley H.E."/>
            <person name="Wieczorek A."/>
            <person name="Wynn R."/>
        </authorList>
    </citation>
    <scope>PROTEIN SEQUENCE</scope>
</reference>
<dbReference type="SMR" id="P67955"/>
<dbReference type="GO" id="GO:0005615">
    <property type="term" value="C:extracellular space"/>
    <property type="evidence" value="ECO:0007669"/>
    <property type="project" value="UniProtKB-ARBA"/>
</dbReference>
<dbReference type="GO" id="GO:0004867">
    <property type="term" value="F:serine-type endopeptidase inhibitor activity"/>
    <property type="evidence" value="ECO:0007669"/>
    <property type="project" value="UniProtKB-KW"/>
</dbReference>
<dbReference type="CDD" id="cd00104">
    <property type="entry name" value="KAZAL_FS"/>
    <property type="match status" value="1"/>
</dbReference>
<dbReference type="FunFam" id="3.30.60.30:FF:000037">
    <property type="entry name" value="Ovomucoid"/>
    <property type="match status" value="1"/>
</dbReference>
<dbReference type="Gene3D" id="3.30.60.30">
    <property type="match status" value="1"/>
</dbReference>
<dbReference type="InterPro" id="IPR051597">
    <property type="entry name" value="Bifunctional_prot_inhibitor"/>
</dbReference>
<dbReference type="InterPro" id="IPR002350">
    <property type="entry name" value="Kazal_dom"/>
</dbReference>
<dbReference type="InterPro" id="IPR036058">
    <property type="entry name" value="Kazal_dom_sf"/>
</dbReference>
<dbReference type="InterPro" id="IPR001239">
    <property type="entry name" value="Prot_inh_Kazal-m"/>
</dbReference>
<dbReference type="PANTHER" id="PTHR47729:SF1">
    <property type="entry name" value="OVOMUCOID-LIKE-RELATED"/>
    <property type="match status" value="1"/>
</dbReference>
<dbReference type="PANTHER" id="PTHR47729">
    <property type="entry name" value="SERINE PEPTIDASE INHIBITOR, KAZAL TYPE 2, TANDEM DUPLICATE 1-RELATED"/>
    <property type="match status" value="1"/>
</dbReference>
<dbReference type="Pfam" id="PF00050">
    <property type="entry name" value="Kazal_1"/>
    <property type="match status" value="1"/>
</dbReference>
<dbReference type="PRINTS" id="PR00290">
    <property type="entry name" value="KAZALINHBTR"/>
</dbReference>
<dbReference type="SMART" id="SM00280">
    <property type="entry name" value="KAZAL"/>
    <property type="match status" value="1"/>
</dbReference>
<dbReference type="SUPFAM" id="SSF100895">
    <property type="entry name" value="Kazal-type serine protease inhibitors"/>
    <property type="match status" value="1"/>
</dbReference>
<dbReference type="PROSITE" id="PS00282">
    <property type="entry name" value="KAZAL_1"/>
    <property type="match status" value="1"/>
</dbReference>
<dbReference type="PROSITE" id="PS51465">
    <property type="entry name" value="KAZAL_2"/>
    <property type="match status" value="1"/>
</dbReference>
<accession>P67955</accession>
<accession>P05586</accession>
<keyword id="KW-0903">Direct protein sequencing</keyword>
<keyword id="KW-1015">Disulfide bond</keyword>
<keyword id="KW-0325">Glycoprotein</keyword>
<keyword id="KW-0646">Protease inhibitor</keyword>
<keyword id="KW-0677">Repeat</keyword>
<keyword id="KW-0964">Secreted</keyword>
<keyword id="KW-0722">Serine protease inhibitor</keyword>
<sequence length="56" mass="6039">LAAVSVDCSEYPKPACTMEYRPLCGSDNKTYGNKCNFCNAVVESNGTLTLSHFGKC</sequence>
<organism>
    <name type="scientific">Lophura swinhoii</name>
    <name type="common">Swinhoe's pheasant</name>
    <dbReference type="NCBI Taxonomy" id="140446"/>
    <lineage>
        <taxon>Eukaryota</taxon>
        <taxon>Metazoa</taxon>
        <taxon>Chordata</taxon>
        <taxon>Craniata</taxon>
        <taxon>Vertebrata</taxon>
        <taxon>Euteleostomi</taxon>
        <taxon>Archelosauria</taxon>
        <taxon>Archosauria</taxon>
        <taxon>Dinosauria</taxon>
        <taxon>Saurischia</taxon>
        <taxon>Theropoda</taxon>
        <taxon>Coelurosauria</taxon>
        <taxon>Aves</taxon>
        <taxon>Neognathae</taxon>
        <taxon>Galloanserae</taxon>
        <taxon>Galliformes</taxon>
        <taxon>Phasianidae</taxon>
        <taxon>Phasianinae</taxon>
        <taxon>Lophura</taxon>
    </lineage>
</organism>
<comment type="subcellular location">
    <subcellularLocation>
        <location>Secreted</location>
    </subcellularLocation>
</comment>
<comment type="domain">
    <text>Avian ovomucoid consists of three homologous, tandem Kazal family inhibitory domains.</text>
</comment>
<name>IOVO_LOPSW</name>
<feature type="chain" id="PRO_0000073140" description="Ovomucoid">
    <location>
        <begin position="1" status="less than"/>
        <end position="56" status="greater than"/>
    </location>
</feature>
<feature type="domain" description="Kazal-like" evidence="1">
    <location>
        <begin position="6"/>
        <end position="56"/>
    </location>
</feature>
<feature type="site" description="Reactive bond 3">
    <location>
        <begin position="18"/>
        <end position="19"/>
    </location>
</feature>
<feature type="glycosylation site" description="N-linked (GlcNAc...) asparagine">
    <location>
        <position position="45"/>
    </location>
</feature>
<feature type="disulfide bond">
    <location>
        <begin position="8"/>
        <end position="38"/>
    </location>
</feature>
<feature type="disulfide bond">
    <location>
        <begin position="16"/>
        <end position="35"/>
    </location>
</feature>
<feature type="disulfide bond">
    <location>
        <begin position="24"/>
        <end position="56"/>
    </location>
</feature>
<feature type="non-terminal residue">
    <location>
        <position position="1"/>
    </location>
</feature>
<feature type="non-terminal residue">
    <location>
        <position position="56"/>
    </location>
</feature>
<proteinExistence type="evidence at protein level"/>
<protein>
    <recommendedName>
        <fullName>Ovomucoid</fullName>
    </recommendedName>
</protein>